<dbReference type="EMBL" id="KF612500">
    <property type="protein sequence ID" value="AIL48758.1"/>
    <property type="molecule type" value="mRNA"/>
</dbReference>
<dbReference type="SMR" id="C0HJQ5"/>
<dbReference type="GO" id="GO:0005576">
    <property type="term" value="C:extracellular region"/>
    <property type="evidence" value="ECO:0007669"/>
    <property type="project" value="UniProtKB-SubCell"/>
</dbReference>
<dbReference type="GO" id="GO:0008200">
    <property type="term" value="F:ion channel inhibitor activity"/>
    <property type="evidence" value="ECO:0007669"/>
    <property type="project" value="InterPro"/>
</dbReference>
<dbReference type="GO" id="GO:0015459">
    <property type="term" value="F:potassium channel regulator activity"/>
    <property type="evidence" value="ECO:0007669"/>
    <property type="project" value="UniProtKB-KW"/>
</dbReference>
<dbReference type="GO" id="GO:0090729">
    <property type="term" value="F:toxin activity"/>
    <property type="evidence" value="ECO:0007669"/>
    <property type="project" value="UniProtKB-KW"/>
</dbReference>
<dbReference type="InterPro" id="IPR036574">
    <property type="entry name" value="Scorpion_toxin-like_sf"/>
</dbReference>
<dbReference type="InterPro" id="IPR008911">
    <property type="entry name" value="Toxin_alpha-KTx_8/9"/>
</dbReference>
<dbReference type="Pfam" id="PF05453">
    <property type="entry name" value="Toxin_6"/>
    <property type="match status" value="1"/>
</dbReference>
<dbReference type="SUPFAM" id="SSF57095">
    <property type="entry name" value="Scorpion toxin-like"/>
    <property type="match status" value="1"/>
</dbReference>
<accession>C0HJQ5</accession>
<accession>A0A088DAD0</accession>
<name>KAX87_MESEU</name>
<keyword id="KW-0903">Direct protein sequencing</keyword>
<keyword id="KW-1015">Disulfide bond</keyword>
<keyword id="KW-0872">Ion channel impairing toxin</keyword>
<keyword id="KW-0632">Potassium channel impairing toxin</keyword>
<keyword id="KW-0964">Secreted</keyword>
<keyword id="KW-0732">Signal</keyword>
<keyword id="KW-0800">Toxin</keyword>
<keyword id="KW-1220">Voltage-gated potassium channel impairing toxin</keyword>
<protein>
    <recommendedName>
        <fullName evidence="3">Potassium channel toxin alpha-KTx 8.7</fullName>
    </recommendedName>
    <alternativeName>
        <fullName evidence="3">Toxin MeKTx1-2</fullName>
    </alternativeName>
</protein>
<sequence length="57" mass="6417">MSRLYAIILIALVFNVIMTIMPDMKVEAVSCEDCPPHCATKDQRAKCENDKCVCEPK</sequence>
<reference key="1">
    <citation type="journal article" date="2015" name="J. Biol. Chem.">
        <title>Variability of potassium channel blockers in Mesobuthus eupeus scorpion venom with focus on Kv1.1: an integrated transcriptomic and proteomic study.</title>
        <authorList>
            <person name="Kuzmenkov A.I."/>
            <person name="Vassilevski A.A."/>
            <person name="Kudryashova K.S."/>
            <person name="Nekrasova O.V."/>
            <person name="Peigneur S."/>
            <person name="Tytgat J."/>
            <person name="Feofanov A.V."/>
            <person name="Kirpichnikov M.P."/>
            <person name="Grishin E.V."/>
        </authorList>
    </citation>
    <scope>NUCLEOTIDE SEQUENCE [MRNA]</scope>
    <scope>PROTEIN SEQUENCE OF 29-57</scope>
    <scope>MASS SPECTROMETRY</scope>
    <scope>SUBCELLULAR LOCATION</scope>
    <source>
        <tissue>Venom</tissue>
        <tissue>Venom gland</tissue>
    </source>
</reference>
<proteinExistence type="evidence at protein level"/>
<feature type="signal peptide" evidence="2">
    <location>
        <begin position="1"/>
        <end position="28"/>
    </location>
</feature>
<feature type="peptide" id="PRO_0000433143" description="Potassium channel toxin alpha-KTx 8.7" evidence="2">
    <location>
        <begin position="29"/>
        <end position="57"/>
    </location>
</feature>
<feature type="disulfide bond" evidence="1">
    <location>
        <begin position="31"/>
        <end position="47"/>
    </location>
</feature>
<feature type="disulfide bond" evidence="1">
    <location>
        <begin position="34"/>
        <end position="52"/>
    </location>
</feature>
<feature type="disulfide bond" evidence="1">
    <location>
        <begin position="38"/>
        <end position="54"/>
    </location>
</feature>
<evidence type="ECO:0000250" key="1">
    <source>
        <dbReference type="UniProtKB" id="Q9U8D2"/>
    </source>
</evidence>
<evidence type="ECO:0000269" key="2">
    <source>
    </source>
</evidence>
<evidence type="ECO:0000303" key="3">
    <source>
    </source>
</evidence>
<evidence type="ECO:0000305" key="4">
    <source>
    </source>
</evidence>
<organism>
    <name type="scientific">Mesobuthus eupeus</name>
    <name type="common">Lesser Asian scorpion</name>
    <name type="synonym">Buthus eupeus</name>
    <dbReference type="NCBI Taxonomy" id="34648"/>
    <lineage>
        <taxon>Eukaryota</taxon>
        <taxon>Metazoa</taxon>
        <taxon>Ecdysozoa</taxon>
        <taxon>Arthropoda</taxon>
        <taxon>Chelicerata</taxon>
        <taxon>Arachnida</taxon>
        <taxon>Scorpiones</taxon>
        <taxon>Buthida</taxon>
        <taxon>Buthoidea</taxon>
        <taxon>Buthidae</taxon>
        <taxon>Mesobuthus</taxon>
    </lineage>
</organism>
<comment type="function">
    <text evidence="2">Inhibits voltage-gated potassium channel rKv1.1/KCNA1 at nanomolar ranges (IC(50)=8.5 nM).</text>
</comment>
<comment type="subcellular location">
    <subcellularLocation>
        <location evidence="2">Secreted</location>
    </subcellularLocation>
</comment>
<comment type="tissue specificity">
    <text evidence="4">Expressed by the venom gland.</text>
</comment>
<comment type="domain">
    <text evidence="1">Has the structural arrangement of an alpha-helix connected to a beta-sheet by disulfide bonds (CSalpha/beta).</text>
</comment>
<comment type="mass spectrometry" mass="3232.0" method="MALDI" evidence="2"/>
<comment type="similarity">
    <text evidence="3">Belongs to the short scorpion toxin superfamily. Potassium channel inhibitor family. Alpha-KTx 08 subfamily.</text>
</comment>